<sequence>MKALSKLKAEKGIWLVDAPKPEMGHNDLLIKIKKTAICGTDMHIYNWDEWSQKTIPVPMVVGHEYVGEVVDIGQEVRGFKIGDRVSGEGHITCGHCRNCRAGRTHLCRNTSGVGVNREGSFAEYLVIPAFNAFKIPDDISDDLASIFDPFGNAVHTALSFDLVGEDVLITGAGPIGIMAAAVCRHVGARHVVITDVNEYRLELARKMGATRAVNVSKENLKDVMKELGMTEGFDVGLEMSGVPSAFHAMLDTMNHGGKVAMLGIPGGEMAIDWSKVIFKGLVIKGIYGREMFETWYKMASLIQSGLDISPIITHHYKIDDFQKGFDAMGSGQSGKVILSWD</sequence>
<proteinExistence type="inferred from homology"/>
<dbReference type="EC" id="1.1.1.103" evidence="1"/>
<dbReference type="EMBL" id="CP000681">
    <property type="protein sequence ID" value="ABP77608.1"/>
    <property type="molecule type" value="Genomic_DNA"/>
</dbReference>
<dbReference type="SMR" id="A4YCC5"/>
<dbReference type="STRING" id="319224.Sputcn32_3902"/>
<dbReference type="KEGG" id="spc:Sputcn32_3902"/>
<dbReference type="eggNOG" id="COG1063">
    <property type="taxonomic scope" value="Bacteria"/>
</dbReference>
<dbReference type="HOGENOM" id="CLU_026673_11_0_6"/>
<dbReference type="UniPathway" id="UPA00046">
    <property type="reaction ID" value="UER00505"/>
</dbReference>
<dbReference type="GO" id="GO:0005737">
    <property type="term" value="C:cytoplasm"/>
    <property type="evidence" value="ECO:0007669"/>
    <property type="project" value="UniProtKB-SubCell"/>
</dbReference>
<dbReference type="GO" id="GO:0008743">
    <property type="term" value="F:L-threonine 3-dehydrogenase activity"/>
    <property type="evidence" value="ECO:0007669"/>
    <property type="project" value="UniProtKB-UniRule"/>
</dbReference>
<dbReference type="GO" id="GO:0008270">
    <property type="term" value="F:zinc ion binding"/>
    <property type="evidence" value="ECO:0007669"/>
    <property type="project" value="UniProtKB-UniRule"/>
</dbReference>
<dbReference type="GO" id="GO:0019518">
    <property type="term" value="P:L-threonine catabolic process to glycine"/>
    <property type="evidence" value="ECO:0007669"/>
    <property type="project" value="UniProtKB-UniPathway"/>
</dbReference>
<dbReference type="Gene3D" id="3.90.180.10">
    <property type="entry name" value="Medium-chain alcohol dehydrogenases, catalytic domain"/>
    <property type="match status" value="1"/>
</dbReference>
<dbReference type="Gene3D" id="3.40.50.720">
    <property type="entry name" value="NAD(P)-binding Rossmann-like Domain"/>
    <property type="match status" value="1"/>
</dbReference>
<dbReference type="HAMAP" id="MF_00627">
    <property type="entry name" value="Thr_dehydrog"/>
    <property type="match status" value="1"/>
</dbReference>
<dbReference type="InterPro" id="IPR013149">
    <property type="entry name" value="ADH-like_C"/>
</dbReference>
<dbReference type="InterPro" id="IPR013154">
    <property type="entry name" value="ADH-like_N"/>
</dbReference>
<dbReference type="InterPro" id="IPR002328">
    <property type="entry name" value="ADH_Zn_CS"/>
</dbReference>
<dbReference type="InterPro" id="IPR011032">
    <property type="entry name" value="GroES-like_sf"/>
</dbReference>
<dbReference type="InterPro" id="IPR004627">
    <property type="entry name" value="L-Threonine_3-DHase"/>
</dbReference>
<dbReference type="InterPro" id="IPR036291">
    <property type="entry name" value="NAD(P)-bd_dom_sf"/>
</dbReference>
<dbReference type="InterPro" id="IPR020843">
    <property type="entry name" value="PKS_ER"/>
</dbReference>
<dbReference type="InterPro" id="IPR050129">
    <property type="entry name" value="Zn_alcohol_dh"/>
</dbReference>
<dbReference type="NCBIfam" id="NF003808">
    <property type="entry name" value="PRK05396.1"/>
    <property type="match status" value="1"/>
</dbReference>
<dbReference type="NCBIfam" id="TIGR00692">
    <property type="entry name" value="tdh"/>
    <property type="match status" value="1"/>
</dbReference>
<dbReference type="PANTHER" id="PTHR43401">
    <property type="entry name" value="L-THREONINE 3-DEHYDROGENASE"/>
    <property type="match status" value="1"/>
</dbReference>
<dbReference type="PANTHER" id="PTHR43401:SF2">
    <property type="entry name" value="L-THREONINE 3-DEHYDROGENASE"/>
    <property type="match status" value="1"/>
</dbReference>
<dbReference type="Pfam" id="PF08240">
    <property type="entry name" value="ADH_N"/>
    <property type="match status" value="1"/>
</dbReference>
<dbReference type="Pfam" id="PF00107">
    <property type="entry name" value="ADH_zinc_N"/>
    <property type="match status" value="1"/>
</dbReference>
<dbReference type="SMART" id="SM00829">
    <property type="entry name" value="PKS_ER"/>
    <property type="match status" value="1"/>
</dbReference>
<dbReference type="SUPFAM" id="SSF50129">
    <property type="entry name" value="GroES-like"/>
    <property type="match status" value="1"/>
</dbReference>
<dbReference type="SUPFAM" id="SSF51735">
    <property type="entry name" value="NAD(P)-binding Rossmann-fold domains"/>
    <property type="match status" value="1"/>
</dbReference>
<dbReference type="PROSITE" id="PS00059">
    <property type="entry name" value="ADH_ZINC"/>
    <property type="match status" value="1"/>
</dbReference>
<name>TDH_SHEPC</name>
<gene>
    <name evidence="1" type="primary">tdh</name>
    <name type="ordered locus">Sputcn32_3902</name>
</gene>
<evidence type="ECO:0000255" key="1">
    <source>
        <dbReference type="HAMAP-Rule" id="MF_00627"/>
    </source>
</evidence>
<accession>A4YCC5</accession>
<reference key="1">
    <citation type="submission" date="2007-04" db="EMBL/GenBank/DDBJ databases">
        <title>Complete sequence of Shewanella putrefaciens CN-32.</title>
        <authorList>
            <consortium name="US DOE Joint Genome Institute"/>
            <person name="Copeland A."/>
            <person name="Lucas S."/>
            <person name="Lapidus A."/>
            <person name="Barry K."/>
            <person name="Detter J.C."/>
            <person name="Glavina del Rio T."/>
            <person name="Hammon N."/>
            <person name="Israni S."/>
            <person name="Dalin E."/>
            <person name="Tice H."/>
            <person name="Pitluck S."/>
            <person name="Chain P."/>
            <person name="Malfatti S."/>
            <person name="Shin M."/>
            <person name="Vergez L."/>
            <person name="Schmutz J."/>
            <person name="Larimer F."/>
            <person name="Land M."/>
            <person name="Hauser L."/>
            <person name="Kyrpides N."/>
            <person name="Mikhailova N."/>
            <person name="Romine M.F."/>
            <person name="Fredrickson J."/>
            <person name="Tiedje J."/>
            <person name="Richardson P."/>
        </authorList>
    </citation>
    <scope>NUCLEOTIDE SEQUENCE [LARGE SCALE GENOMIC DNA]</scope>
    <source>
        <strain>CN-32 / ATCC BAA-453</strain>
    </source>
</reference>
<comment type="function">
    <text evidence="1">Catalyzes the NAD(+)-dependent oxidation of L-threonine to 2-amino-3-ketobutyrate.</text>
</comment>
<comment type="catalytic activity">
    <reaction evidence="1">
        <text>L-threonine + NAD(+) = (2S)-2-amino-3-oxobutanoate + NADH + H(+)</text>
        <dbReference type="Rhea" id="RHEA:13161"/>
        <dbReference type="ChEBI" id="CHEBI:15378"/>
        <dbReference type="ChEBI" id="CHEBI:57540"/>
        <dbReference type="ChEBI" id="CHEBI:57926"/>
        <dbReference type="ChEBI" id="CHEBI:57945"/>
        <dbReference type="ChEBI" id="CHEBI:78948"/>
        <dbReference type="EC" id="1.1.1.103"/>
    </reaction>
</comment>
<comment type="cofactor">
    <cofactor evidence="1">
        <name>Zn(2+)</name>
        <dbReference type="ChEBI" id="CHEBI:29105"/>
    </cofactor>
    <text evidence="1">Binds 2 Zn(2+) ions per subunit.</text>
</comment>
<comment type="pathway">
    <text evidence="1">Amino-acid degradation; L-threonine degradation via oxydo-reductase pathway; glycine from L-threonine: step 1/2.</text>
</comment>
<comment type="subunit">
    <text evidence="1">Homotetramer.</text>
</comment>
<comment type="subcellular location">
    <subcellularLocation>
        <location evidence="1">Cytoplasm</location>
    </subcellularLocation>
</comment>
<comment type="similarity">
    <text evidence="1">Belongs to the zinc-containing alcohol dehydrogenase family.</text>
</comment>
<feature type="chain" id="PRO_1000051656" description="L-threonine 3-dehydrogenase">
    <location>
        <begin position="1"/>
        <end position="341"/>
    </location>
</feature>
<feature type="active site" description="Charge relay system" evidence="1">
    <location>
        <position position="40"/>
    </location>
</feature>
<feature type="active site" description="Charge relay system" evidence="1">
    <location>
        <position position="43"/>
    </location>
</feature>
<feature type="binding site" evidence="1">
    <location>
        <position position="38"/>
    </location>
    <ligand>
        <name>Zn(2+)</name>
        <dbReference type="ChEBI" id="CHEBI:29105"/>
        <label>1</label>
        <note>catalytic</note>
    </ligand>
</feature>
<feature type="binding site" evidence="1">
    <location>
        <position position="63"/>
    </location>
    <ligand>
        <name>Zn(2+)</name>
        <dbReference type="ChEBI" id="CHEBI:29105"/>
        <label>1</label>
        <note>catalytic</note>
    </ligand>
</feature>
<feature type="binding site" evidence="1">
    <location>
        <position position="64"/>
    </location>
    <ligand>
        <name>Zn(2+)</name>
        <dbReference type="ChEBI" id="CHEBI:29105"/>
        <label>1</label>
        <note>catalytic</note>
    </ligand>
</feature>
<feature type="binding site" evidence="1">
    <location>
        <position position="93"/>
    </location>
    <ligand>
        <name>Zn(2+)</name>
        <dbReference type="ChEBI" id="CHEBI:29105"/>
        <label>2</label>
    </ligand>
</feature>
<feature type="binding site" evidence="1">
    <location>
        <position position="96"/>
    </location>
    <ligand>
        <name>Zn(2+)</name>
        <dbReference type="ChEBI" id="CHEBI:29105"/>
        <label>2</label>
    </ligand>
</feature>
<feature type="binding site" evidence="1">
    <location>
        <position position="99"/>
    </location>
    <ligand>
        <name>Zn(2+)</name>
        <dbReference type="ChEBI" id="CHEBI:29105"/>
        <label>2</label>
    </ligand>
</feature>
<feature type="binding site" evidence="1">
    <location>
        <position position="107"/>
    </location>
    <ligand>
        <name>Zn(2+)</name>
        <dbReference type="ChEBI" id="CHEBI:29105"/>
        <label>2</label>
    </ligand>
</feature>
<feature type="binding site" evidence="1">
    <location>
        <position position="175"/>
    </location>
    <ligand>
        <name>NAD(+)</name>
        <dbReference type="ChEBI" id="CHEBI:57540"/>
    </ligand>
</feature>
<feature type="binding site" evidence="1">
    <location>
        <position position="195"/>
    </location>
    <ligand>
        <name>NAD(+)</name>
        <dbReference type="ChEBI" id="CHEBI:57540"/>
    </ligand>
</feature>
<feature type="binding site" evidence="1">
    <location>
        <position position="200"/>
    </location>
    <ligand>
        <name>NAD(+)</name>
        <dbReference type="ChEBI" id="CHEBI:57540"/>
    </ligand>
</feature>
<feature type="binding site" evidence="1">
    <location>
        <begin position="262"/>
        <end position="264"/>
    </location>
    <ligand>
        <name>NAD(+)</name>
        <dbReference type="ChEBI" id="CHEBI:57540"/>
    </ligand>
</feature>
<feature type="binding site" evidence="1">
    <location>
        <begin position="286"/>
        <end position="287"/>
    </location>
    <ligand>
        <name>NAD(+)</name>
        <dbReference type="ChEBI" id="CHEBI:57540"/>
    </ligand>
</feature>
<feature type="site" description="Important for catalytic activity for the proton relay mechanism but does not participate directly in the coordination of zinc atom" evidence="1">
    <location>
        <position position="148"/>
    </location>
</feature>
<keyword id="KW-0963">Cytoplasm</keyword>
<keyword id="KW-0479">Metal-binding</keyword>
<keyword id="KW-0520">NAD</keyword>
<keyword id="KW-0560">Oxidoreductase</keyword>
<keyword id="KW-0862">Zinc</keyword>
<protein>
    <recommendedName>
        <fullName evidence="1">L-threonine 3-dehydrogenase</fullName>
        <shortName evidence="1">TDH</shortName>
        <ecNumber evidence="1">1.1.1.103</ecNumber>
    </recommendedName>
</protein>
<organism>
    <name type="scientific">Shewanella putrefaciens (strain CN-32 / ATCC BAA-453)</name>
    <dbReference type="NCBI Taxonomy" id="319224"/>
    <lineage>
        <taxon>Bacteria</taxon>
        <taxon>Pseudomonadati</taxon>
        <taxon>Pseudomonadota</taxon>
        <taxon>Gammaproteobacteria</taxon>
        <taxon>Alteromonadales</taxon>
        <taxon>Shewanellaceae</taxon>
        <taxon>Shewanella</taxon>
    </lineage>
</organism>